<evidence type="ECO:0000255" key="1">
    <source>
        <dbReference type="HAMAP-Rule" id="MF_00069"/>
    </source>
</evidence>
<comment type="function">
    <text evidence="1">Catalyzes the reduction of hydroxylamine to form NH(3) and H(2)O.</text>
</comment>
<comment type="catalytic activity">
    <reaction evidence="1">
        <text>A + NH4(+) + H2O = hydroxylamine + AH2 + H(+)</text>
        <dbReference type="Rhea" id="RHEA:22052"/>
        <dbReference type="ChEBI" id="CHEBI:13193"/>
        <dbReference type="ChEBI" id="CHEBI:15377"/>
        <dbReference type="ChEBI" id="CHEBI:15378"/>
        <dbReference type="ChEBI" id="CHEBI:15429"/>
        <dbReference type="ChEBI" id="CHEBI:17499"/>
        <dbReference type="ChEBI" id="CHEBI:28938"/>
        <dbReference type="EC" id="1.7.99.1"/>
    </reaction>
</comment>
<comment type="cofactor">
    <cofactor evidence="1">
        <name>[2Fe-2S] cluster</name>
        <dbReference type="ChEBI" id="CHEBI:190135"/>
    </cofactor>
    <text evidence="1">Binds 1 [2Fe-2S] cluster.</text>
</comment>
<comment type="cofactor">
    <cofactor evidence="1">
        <name>hybrid [4Fe-2O-2S] cluster</name>
        <dbReference type="ChEBI" id="CHEBI:60519"/>
    </cofactor>
    <text evidence="1">Binds 1 hybrid [4Fe-2O-2S] cluster.</text>
</comment>
<comment type="subcellular location">
    <subcellularLocation>
        <location evidence="1">Cytoplasm</location>
    </subcellularLocation>
</comment>
<comment type="similarity">
    <text evidence="1">Belongs to the HCP family.</text>
</comment>
<name>HCP_SALPB</name>
<feature type="chain" id="PRO_1000075116" description="Hydroxylamine reductase">
    <location>
        <begin position="1"/>
        <end position="550"/>
    </location>
</feature>
<feature type="binding site" evidence="1">
    <location>
        <position position="3"/>
    </location>
    <ligand>
        <name>[2Fe-2S] cluster</name>
        <dbReference type="ChEBI" id="CHEBI:190135"/>
    </ligand>
</feature>
<feature type="binding site" evidence="1">
    <location>
        <position position="6"/>
    </location>
    <ligand>
        <name>[2Fe-2S] cluster</name>
        <dbReference type="ChEBI" id="CHEBI:190135"/>
    </ligand>
</feature>
<feature type="binding site" evidence="1">
    <location>
        <position position="18"/>
    </location>
    <ligand>
        <name>[2Fe-2S] cluster</name>
        <dbReference type="ChEBI" id="CHEBI:190135"/>
    </ligand>
</feature>
<feature type="binding site" evidence="1">
    <location>
        <position position="25"/>
    </location>
    <ligand>
        <name>[2Fe-2S] cluster</name>
        <dbReference type="ChEBI" id="CHEBI:190135"/>
    </ligand>
</feature>
<feature type="binding site" evidence="1">
    <location>
        <position position="249"/>
    </location>
    <ligand>
        <name>hybrid [4Fe-2O-2S] cluster</name>
        <dbReference type="ChEBI" id="CHEBI:60519"/>
    </ligand>
</feature>
<feature type="binding site" evidence="1">
    <location>
        <position position="273"/>
    </location>
    <ligand>
        <name>hybrid [4Fe-2O-2S] cluster</name>
        <dbReference type="ChEBI" id="CHEBI:60519"/>
    </ligand>
</feature>
<feature type="binding site" evidence="1">
    <location>
        <position position="317"/>
    </location>
    <ligand>
        <name>hybrid [4Fe-2O-2S] cluster</name>
        <dbReference type="ChEBI" id="CHEBI:60519"/>
    </ligand>
</feature>
<feature type="binding site" description="via persulfide group" evidence="1">
    <location>
        <position position="405"/>
    </location>
    <ligand>
        <name>hybrid [4Fe-2O-2S] cluster</name>
        <dbReference type="ChEBI" id="CHEBI:60519"/>
    </ligand>
</feature>
<feature type="binding site" evidence="1">
    <location>
        <position position="433"/>
    </location>
    <ligand>
        <name>hybrid [4Fe-2O-2S] cluster</name>
        <dbReference type="ChEBI" id="CHEBI:60519"/>
    </ligand>
</feature>
<feature type="binding site" evidence="1">
    <location>
        <position position="458"/>
    </location>
    <ligand>
        <name>hybrid [4Fe-2O-2S] cluster</name>
        <dbReference type="ChEBI" id="CHEBI:60519"/>
    </ligand>
</feature>
<feature type="binding site" evidence="1">
    <location>
        <position position="492"/>
    </location>
    <ligand>
        <name>hybrid [4Fe-2O-2S] cluster</name>
        <dbReference type="ChEBI" id="CHEBI:60519"/>
    </ligand>
</feature>
<feature type="binding site" evidence="1">
    <location>
        <position position="494"/>
    </location>
    <ligand>
        <name>hybrid [4Fe-2O-2S] cluster</name>
        <dbReference type="ChEBI" id="CHEBI:60519"/>
    </ligand>
</feature>
<feature type="modified residue" description="Cysteine persulfide" evidence="1">
    <location>
        <position position="405"/>
    </location>
</feature>
<gene>
    <name evidence="1" type="primary">hcp</name>
    <name type="ordered locus">SPAB_02587</name>
</gene>
<sequence>MFCVQCEQTIRTPAGNGCSYAQGMCGKTAETSDLQDLLIAALQGLSAWAVKAREYGIINHDVDNFAPRAFFSTLTNVNFDSPRIVGYAREAIALREALKAQCLSVDANAHCDNPMADLQLVSDDLGELQRQAAEFTPNKDKAAIGENILGLRLLCLYGLKGAAAYMEHAHVLGQYDNDIYAQYHKIMAWLGTWPADMNALLECAMEIGQMNFKVMSILDAGETTKYGHPTPTQVNVKATEGKCILISGHDLKDLYNLLEQTEGTGVNVYTHGEMLPAHGYPELRKFKHLVGNYGSGWQNQQVEFARFPGPIVMTSNCIIDPTVGSYDDRIWTRSIVGWPGVSHLEGDDFGPVIAQAQQMAGFPYSEIPHLITVGFGRQTLLGAADTLIDLVSREKLRHIFLVGGCDGARGERNYFTDFATSVPDDCLILTLACGKYRFNKLEFGDIEGLPRLVDAGQCNDAYSAIILAVTLAEKLGCGVNDLPLSLVLSWFEQKAIVILLTLLSLGVKNIVTGPTAPGFFTPDLLAILNEKFGLRSVTTVEEDMKQLLSA</sequence>
<dbReference type="EC" id="1.7.99.1" evidence="1"/>
<dbReference type="EMBL" id="CP000886">
    <property type="protein sequence ID" value="ABX67966.1"/>
    <property type="molecule type" value="Genomic_DNA"/>
</dbReference>
<dbReference type="RefSeq" id="WP_000458785.1">
    <property type="nucleotide sequence ID" value="NC_010102.1"/>
</dbReference>
<dbReference type="SMR" id="A9N804"/>
<dbReference type="KEGG" id="spq:SPAB_02587"/>
<dbReference type="PATRIC" id="fig|1016998.12.peg.2447"/>
<dbReference type="HOGENOM" id="CLU_038344_2_0_6"/>
<dbReference type="BioCyc" id="SENT1016998:SPAB_RS10520-MONOMER"/>
<dbReference type="Proteomes" id="UP000008556">
    <property type="component" value="Chromosome"/>
</dbReference>
<dbReference type="GO" id="GO:0005737">
    <property type="term" value="C:cytoplasm"/>
    <property type="evidence" value="ECO:0007669"/>
    <property type="project" value="UniProtKB-SubCell"/>
</dbReference>
<dbReference type="GO" id="GO:0051537">
    <property type="term" value="F:2 iron, 2 sulfur cluster binding"/>
    <property type="evidence" value="ECO:0007669"/>
    <property type="project" value="UniProtKB-KW"/>
</dbReference>
<dbReference type="GO" id="GO:0050418">
    <property type="term" value="F:hydroxylamine reductase activity"/>
    <property type="evidence" value="ECO:0007669"/>
    <property type="project" value="UniProtKB-UniRule"/>
</dbReference>
<dbReference type="GO" id="GO:0046872">
    <property type="term" value="F:metal ion binding"/>
    <property type="evidence" value="ECO:0007669"/>
    <property type="project" value="UniProtKB-KW"/>
</dbReference>
<dbReference type="GO" id="GO:0004601">
    <property type="term" value="F:peroxidase activity"/>
    <property type="evidence" value="ECO:0007669"/>
    <property type="project" value="TreeGrafter"/>
</dbReference>
<dbReference type="GO" id="GO:0042542">
    <property type="term" value="P:response to hydrogen peroxide"/>
    <property type="evidence" value="ECO:0007669"/>
    <property type="project" value="TreeGrafter"/>
</dbReference>
<dbReference type="CDD" id="cd01914">
    <property type="entry name" value="HCP"/>
    <property type="match status" value="1"/>
</dbReference>
<dbReference type="FunFam" id="1.20.1270.20:FF:000001">
    <property type="entry name" value="Hydroxylamine reductase"/>
    <property type="match status" value="1"/>
</dbReference>
<dbReference type="FunFam" id="1.20.1270.20:FF:000002">
    <property type="entry name" value="Hydroxylamine reductase"/>
    <property type="match status" value="1"/>
</dbReference>
<dbReference type="FunFam" id="3.40.50.2030:FF:000001">
    <property type="entry name" value="Hydroxylamine reductase"/>
    <property type="match status" value="1"/>
</dbReference>
<dbReference type="FunFam" id="3.40.50.2030:FF:000002">
    <property type="entry name" value="Hydroxylamine reductase"/>
    <property type="match status" value="1"/>
</dbReference>
<dbReference type="Gene3D" id="1.20.1270.20">
    <property type="match status" value="2"/>
</dbReference>
<dbReference type="Gene3D" id="3.40.50.2030">
    <property type="match status" value="2"/>
</dbReference>
<dbReference type="HAMAP" id="MF_00069">
    <property type="entry name" value="Hydroxylam_reduct"/>
    <property type="match status" value="1"/>
</dbReference>
<dbReference type="InterPro" id="IPR004137">
    <property type="entry name" value="HCP/CODH"/>
</dbReference>
<dbReference type="InterPro" id="IPR010048">
    <property type="entry name" value="Hydroxylam_reduct"/>
</dbReference>
<dbReference type="InterPro" id="IPR016099">
    <property type="entry name" value="Prismane-like_a/b-sand"/>
</dbReference>
<dbReference type="InterPro" id="IPR011254">
    <property type="entry name" value="Prismane-like_sf"/>
</dbReference>
<dbReference type="InterPro" id="IPR016100">
    <property type="entry name" value="Prismane_a-bundle"/>
</dbReference>
<dbReference type="NCBIfam" id="TIGR01703">
    <property type="entry name" value="hybrid_clust"/>
    <property type="match status" value="1"/>
</dbReference>
<dbReference type="NCBIfam" id="NF003658">
    <property type="entry name" value="PRK05290.1"/>
    <property type="match status" value="1"/>
</dbReference>
<dbReference type="PANTHER" id="PTHR30109">
    <property type="entry name" value="HYDROXYLAMINE REDUCTASE"/>
    <property type="match status" value="1"/>
</dbReference>
<dbReference type="PANTHER" id="PTHR30109:SF0">
    <property type="entry name" value="HYDROXYLAMINE REDUCTASE"/>
    <property type="match status" value="1"/>
</dbReference>
<dbReference type="Pfam" id="PF03063">
    <property type="entry name" value="Prismane"/>
    <property type="match status" value="1"/>
</dbReference>
<dbReference type="PIRSF" id="PIRSF000076">
    <property type="entry name" value="HCP"/>
    <property type="match status" value="1"/>
</dbReference>
<dbReference type="SUPFAM" id="SSF56821">
    <property type="entry name" value="Prismane protein-like"/>
    <property type="match status" value="1"/>
</dbReference>
<keyword id="KW-0001">2Fe-2S</keyword>
<keyword id="KW-0963">Cytoplasm</keyword>
<keyword id="KW-0408">Iron</keyword>
<keyword id="KW-0411">Iron-sulfur</keyword>
<keyword id="KW-0479">Metal-binding</keyword>
<keyword id="KW-0560">Oxidoreductase</keyword>
<organism>
    <name type="scientific">Salmonella paratyphi B (strain ATCC BAA-1250 / SPB7)</name>
    <dbReference type="NCBI Taxonomy" id="1016998"/>
    <lineage>
        <taxon>Bacteria</taxon>
        <taxon>Pseudomonadati</taxon>
        <taxon>Pseudomonadota</taxon>
        <taxon>Gammaproteobacteria</taxon>
        <taxon>Enterobacterales</taxon>
        <taxon>Enterobacteriaceae</taxon>
        <taxon>Salmonella</taxon>
    </lineage>
</organism>
<protein>
    <recommendedName>
        <fullName evidence="1">Hydroxylamine reductase</fullName>
        <ecNumber evidence="1">1.7.99.1</ecNumber>
    </recommendedName>
    <alternativeName>
        <fullName evidence="1">Hybrid-cluster protein</fullName>
        <shortName evidence="1">HCP</shortName>
    </alternativeName>
    <alternativeName>
        <fullName evidence="1">Prismane protein</fullName>
    </alternativeName>
</protein>
<reference key="1">
    <citation type="submission" date="2007-11" db="EMBL/GenBank/DDBJ databases">
        <authorList>
            <consortium name="The Salmonella enterica serovar Paratyphi B Genome Sequencing Project"/>
            <person name="McClelland M."/>
            <person name="Sanderson E.K."/>
            <person name="Porwollik S."/>
            <person name="Spieth J."/>
            <person name="Clifton W.S."/>
            <person name="Fulton R."/>
            <person name="Cordes M."/>
            <person name="Wollam A."/>
            <person name="Shah N."/>
            <person name="Pepin K."/>
            <person name="Bhonagiri V."/>
            <person name="Nash W."/>
            <person name="Johnson M."/>
            <person name="Thiruvilangam P."/>
            <person name="Wilson R."/>
        </authorList>
    </citation>
    <scope>NUCLEOTIDE SEQUENCE [LARGE SCALE GENOMIC DNA]</scope>
    <source>
        <strain>ATCC BAA-1250 / SPB7</strain>
    </source>
</reference>
<proteinExistence type="inferred from homology"/>
<accession>A9N804</accession>